<comment type="function">
    <text evidence="1">Catalyzes the 2'-O-methylation of the ribose of cytidine 1402 (C1402) in 16S rRNA.</text>
</comment>
<comment type="catalytic activity">
    <reaction evidence="1">
        <text>cytidine(1402) in 16S rRNA + S-adenosyl-L-methionine = 2'-O-methylcytidine(1402) in 16S rRNA + S-adenosyl-L-homocysteine + H(+)</text>
        <dbReference type="Rhea" id="RHEA:42924"/>
        <dbReference type="Rhea" id="RHEA-COMP:10285"/>
        <dbReference type="Rhea" id="RHEA-COMP:10286"/>
        <dbReference type="ChEBI" id="CHEBI:15378"/>
        <dbReference type="ChEBI" id="CHEBI:57856"/>
        <dbReference type="ChEBI" id="CHEBI:59789"/>
        <dbReference type="ChEBI" id="CHEBI:74495"/>
        <dbReference type="ChEBI" id="CHEBI:82748"/>
        <dbReference type="EC" id="2.1.1.198"/>
    </reaction>
</comment>
<comment type="subcellular location">
    <subcellularLocation>
        <location evidence="1">Cytoplasm</location>
    </subcellularLocation>
</comment>
<comment type="similarity">
    <text evidence="1">Belongs to the methyltransferase superfamily. RsmI family.</text>
</comment>
<protein>
    <recommendedName>
        <fullName evidence="1">Ribosomal RNA small subunit methyltransferase I</fullName>
        <ecNumber evidence="1">2.1.1.198</ecNumber>
    </recommendedName>
    <alternativeName>
        <fullName evidence="1">16S rRNA 2'-O-ribose C1402 methyltransferase</fullName>
    </alternativeName>
    <alternativeName>
        <fullName evidence="1">rRNA (cytidine-2'-O-)-methyltransferase RsmI</fullName>
    </alternativeName>
</protein>
<sequence>MLYIVGTPIGNLEDITYRAVDVLKSVNVIFAEDTRVTIKLLSRYKINKKMISCNAVTENKKIRLLLDYLAKGDSVAFVSDAGTPGLSDPGSLLVAAAFREGYKVCPIPGVSSFNTIVSVNPFRDKSVLFEGFLPNKGLKRFKKIAELYKRGDAFVLLESGHRLLKLLVEISSVSLDAKILIGREMTKIYEEYQIGKPLELKKYFESSKEKVKGEFTILVSRSSS</sequence>
<keyword id="KW-0963">Cytoplasm</keyword>
<keyword id="KW-0489">Methyltransferase</keyword>
<keyword id="KW-0698">rRNA processing</keyword>
<keyword id="KW-0949">S-adenosyl-L-methionine</keyword>
<keyword id="KW-0808">Transferase</keyword>
<name>RSMI_BORGP</name>
<reference key="1">
    <citation type="journal article" date="2004" name="Nucleic Acids Res.">
        <title>Comparative analysis of the Borrelia garinii genome.</title>
        <authorList>
            <person name="Gloeckner G."/>
            <person name="Lehmann R."/>
            <person name="Romualdi A."/>
            <person name="Pradella S."/>
            <person name="Schulte-Spechtel U."/>
            <person name="Schilhabel M."/>
            <person name="Wilske B."/>
            <person name="Suehnel J."/>
            <person name="Platzer M."/>
        </authorList>
    </citation>
    <scope>NUCLEOTIDE SEQUENCE [LARGE SCALE GENOMIC DNA]</scope>
    <source>
        <strain>ATCC BAA-2496 / DSM 23469 / PBi</strain>
    </source>
</reference>
<proteinExistence type="inferred from homology"/>
<organism>
    <name type="scientific">Borrelia garinii subsp. bavariensis (strain ATCC BAA-2496 / DSM 23469 / PBi)</name>
    <name type="common">Borreliella bavariensis</name>
    <dbReference type="NCBI Taxonomy" id="290434"/>
    <lineage>
        <taxon>Bacteria</taxon>
        <taxon>Pseudomonadati</taxon>
        <taxon>Spirochaetota</taxon>
        <taxon>Spirochaetia</taxon>
        <taxon>Spirochaetales</taxon>
        <taxon>Borreliaceae</taxon>
        <taxon>Borreliella</taxon>
    </lineage>
</organism>
<accession>Q661J3</accession>
<feature type="chain" id="PRO_0000394483" description="Ribosomal RNA small subunit methyltransferase I">
    <location>
        <begin position="1"/>
        <end position="224"/>
    </location>
</feature>
<dbReference type="EC" id="2.1.1.198" evidence="1"/>
<dbReference type="EMBL" id="CP000013">
    <property type="protein sequence ID" value="AAU07278.1"/>
    <property type="molecule type" value="Genomic_DNA"/>
</dbReference>
<dbReference type="RefSeq" id="WP_011193749.1">
    <property type="nucleotide sequence ID" value="NZ_CP028872.1"/>
</dbReference>
<dbReference type="SMR" id="Q661J3"/>
<dbReference type="GeneID" id="45161220"/>
<dbReference type="KEGG" id="bga:BG0435"/>
<dbReference type="eggNOG" id="COG0313">
    <property type="taxonomic scope" value="Bacteria"/>
</dbReference>
<dbReference type="HOGENOM" id="CLU_044779_4_0_12"/>
<dbReference type="OrthoDB" id="9809084at2"/>
<dbReference type="Proteomes" id="UP000002276">
    <property type="component" value="Chromosome"/>
</dbReference>
<dbReference type="GO" id="GO:0005737">
    <property type="term" value="C:cytoplasm"/>
    <property type="evidence" value="ECO:0007669"/>
    <property type="project" value="UniProtKB-SubCell"/>
</dbReference>
<dbReference type="GO" id="GO:0070677">
    <property type="term" value="F:rRNA (cytosine-2'-O-)-methyltransferase activity"/>
    <property type="evidence" value="ECO:0007669"/>
    <property type="project" value="UniProtKB-UniRule"/>
</dbReference>
<dbReference type="CDD" id="cd11648">
    <property type="entry name" value="RsmI"/>
    <property type="match status" value="1"/>
</dbReference>
<dbReference type="Gene3D" id="3.40.1010.10">
    <property type="entry name" value="Cobalt-precorrin-4 Transmethylase, Domain 1"/>
    <property type="match status" value="1"/>
</dbReference>
<dbReference type="Gene3D" id="3.30.950.10">
    <property type="entry name" value="Methyltransferase, Cobalt-precorrin-4 Transmethylase, Domain 2"/>
    <property type="match status" value="1"/>
</dbReference>
<dbReference type="HAMAP" id="MF_01877">
    <property type="entry name" value="16SrRNA_methyltr_I"/>
    <property type="match status" value="1"/>
</dbReference>
<dbReference type="InterPro" id="IPR000878">
    <property type="entry name" value="4pyrrol_Mease"/>
</dbReference>
<dbReference type="InterPro" id="IPR035996">
    <property type="entry name" value="4pyrrol_Methylase_sf"/>
</dbReference>
<dbReference type="InterPro" id="IPR014777">
    <property type="entry name" value="4pyrrole_Mease_sub1"/>
</dbReference>
<dbReference type="InterPro" id="IPR014776">
    <property type="entry name" value="4pyrrole_Mease_sub2"/>
</dbReference>
<dbReference type="InterPro" id="IPR008189">
    <property type="entry name" value="rRNA_ssu_MeTfrase_I"/>
</dbReference>
<dbReference type="InterPro" id="IPR018063">
    <property type="entry name" value="SAM_MeTrfase_RsmI_CS"/>
</dbReference>
<dbReference type="NCBIfam" id="TIGR00096">
    <property type="entry name" value="16S rRNA (cytidine(1402)-2'-O)-methyltransferase"/>
    <property type="match status" value="1"/>
</dbReference>
<dbReference type="PANTHER" id="PTHR46111">
    <property type="entry name" value="RIBOSOMAL RNA SMALL SUBUNIT METHYLTRANSFERASE I"/>
    <property type="match status" value="1"/>
</dbReference>
<dbReference type="PANTHER" id="PTHR46111:SF1">
    <property type="entry name" value="RIBOSOMAL RNA SMALL SUBUNIT METHYLTRANSFERASE I"/>
    <property type="match status" value="1"/>
</dbReference>
<dbReference type="Pfam" id="PF00590">
    <property type="entry name" value="TP_methylase"/>
    <property type="match status" value="1"/>
</dbReference>
<dbReference type="PIRSF" id="PIRSF005917">
    <property type="entry name" value="MTase_YraL"/>
    <property type="match status" value="1"/>
</dbReference>
<dbReference type="SUPFAM" id="SSF53790">
    <property type="entry name" value="Tetrapyrrole methylase"/>
    <property type="match status" value="1"/>
</dbReference>
<dbReference type="PROSITE" id="PS01296">
    <property type="entry name" value="RSMI"/>
    <property type="match status" value="1"/>
</dbReference>
<gene>
    <name evidence="1" type="primary">rsmI</name>
    <name type="ordered locus">BG0435</name>
</gene>
<evidence type="ECO:0000255" key="1">
    <source>
        <dbReference type="HAMAP-Rule" id="MF_01877"/>
    </source>
</evidence>